<accession>Q47EF4</accession>
<comment type="function">
    <text evidence="1">Catalyzes the complicated ring closure reaction between the two acyclic compounds 1-deoxy-D-xylulose-5-phosphate (DXP) and 3-amino-2-oxopropyl phosphate (1-amino-acetone-3-phosphate or AAP) to form pyridoxine 5'-phosphate (PNP) and inorganic phosphate.</text>
</comment>
<comment type="catalytic activity">
    <reaction evidence="1">
        <text>3-amino-2-oxopropyl phosphate + 1-deoxy-D-xylulose 5-phosphate = pyridoxine 5'-phosphate + phosphate + 2 H2O + H(+)</text>
        <dbReference type="Rhea" id="RHEA:15265"/>
        <dbReference type="ChEBI" id="CHEBI:15377"/>
        <dbReference type="ChEBI" id="CHEBI:15378"/>
        <dbReference type="ChEBI" id="CHEBI:43474"/>
        <dbReference type="ChEBI" id="CHEBI:57279"/>
        <dbReference type="ChEBI" id="CHEBI:57792"/>
        <dbReference type="ChEBI" id="CHEBI:58589"/>
        <dbReference type="EC" id="2.6.99.2"/>
    </reaction>
</comment>
<comment type="pathway">
    <text evidence="1">Cofactor biosynthesis; pyridoxine 5'-phosphate biosynthesis; pyridoxine 5'-phosphate from D-erythrose 4-phosphate: step 5/5.</text>
</comment>
<comment type="subunit">
    <text evidence="1">Homooctamer; tetramer of dimers.</text>
</comment>
<comment type="subcellular location">
    <subcellularLocation>
        <location evidence="1">Cytoplasm</location>
    </subcellularLocation>
</comment>
<comment type="similarity">
    <text evidence="1">Belongs to the PNP synthase family.</text>
</comment>
<keyword id="KW-0963">Cytoplasm</keyword>
<keyword id="KW-0664">Pyridoxine biosynthesis</keyword>
<keyword id="KW-0808">Transferase</keyword>
<organism>
    <name type="scientific">Dechloromonas aromatica (strain RCB)</name>
    <dbReference type="NCBI Taxonomy" id="159087"/>
    <lineage>
        <taxon>Bacteria</taxon>
        <taxon>Pseudomonadati</taxon>
        <taxon>Pseudomonadota</taxon>
        <taxon>Betaproteobacteria</taxon>
        <taxon>Rhodocyclales</taxon>
        <taxon>Azonexaceae</taxon>
        <taxon>Dechloromonas</taxon>
    </lineage>
</organism>
<dbReference type="EC" id="2.6.99.2" evidence="1"/>
<dbReference type="EMBL" id="CP000089">
    <property type="protein sequence ID" value="AAZ46777.1"/>
    <property type="molecule type" value="Genomic_DNA"/>
</dbReference>
<dbReference type="SMR" id="Q47EF4"/>
<dbReference type="STRING" id="159087.Daro_2032"/>
<dbReference type="KEGG" id="dar:Daro_2032"/>
<dbReference type="eggNOG" id="COG0854">
    <property type="taxonomic scope" value="Bacteria"/>
</dbReference>
<dbReference type="HOGENOM" id="CLU_074563_0_0_4"/>
<dbReference type="OrthoDB" id="9806590at2"/>
<dbReference type="UniPathway" id="UPA00244">
    <property type="reaction ID" value="UER00313"/>
</dbReference>
<dbReference type="GO" id="GO:0005829">
    <property type="term" value="C:cytosol"/>
    <property type="evidence" value="ECO:0007669"/>
    <property type="project" value="TreeGrafter"/>
</dbReference>
<dbReference type="GO" id="GO:0033856">
    <property type="term" value="F:pyridoxine 5'-phosphate synthase activity"/>
    <property type="evidence" value="ECO:0007669"/>
    <property type="project" value="UniProtKB-EC"/>
</dbReference>
<dbReference type="GO" id="GO:0008615">
    <property type="term" value="P:pyridoxine biosynthetic process"/>
    <property type="evidence" value="ECO:0007669"/>
    <property type="project" value="UniProtKB-UniRule"/>
</dbReference>
<dbReference type="CDD" id="cd00003">
    <property type="entry name" value="PNPsynthase"/>
    <property type="match status" value="1"/>
</dbReference>
<dbReference type="Gene3D" id="3.20.20.70">
    <property type="entry name" value="Aldolase class I"/>
    <property type="match status" value="1"/>
</dbReference>
<dbReference type="HAMAP" id="MF_00279">
    <property type="entry name" value="PdxJ"/>
    <property type="match status" value="1"/>
</dbReference>
<dbReference type="InterPro" id="IPR013785">
    <property type="entry name" value="Aldolase_TIM"/>
</dbReference>
<dbReference type="InterPro" id="IPR004569">
    <property type="entry name" value="PyrdxlP_synth_PdxJ"/>
</dbReference>
<dbReference type="InterPro" id="IPR036130">
    <property type="entry name" value="Pyridoxine-5'_phos_synth"/>
</dbReference>
<dbReference type="NCBIfam" id="TIGR00559">
    <property type="entry name" value="pdxJ"/>
    <property type="match status" value="1"/>
</dbReference>
<dbReference type="NCBIfam" id="NF003625">
    <property type="entry name" value="PRK05265.1-3"/>
    <property type="match status" value="1"/>
</dbReference>
<dbReference type="NCBIfam" id="NF003627">
    <property type="entry name" value="PRK05265.1-5"/>
    <property type="match status" value="1"/>
</dbReference>
<dbReference type="PANTHER" id="PTHR30456">
    <property type="entry name" value="PYRIDOXINE 5'-PHOSPHATE SYNTHASE"/>
    <property type="match status" value="1"/>
</dbReference>
<dbReference type="PANTHER" id="PTHR30456:SF0">
    <property type="entry name" value="PYRIDOXINE 5'-PHOSPHATE SYNTHASE"/>
    <property type="match status" value="1"/>
</dbReference>
<dbReference type="Pfam" id="PF03740">
    <property type="entry name" value="PdxJ"/>
    <property type="match status" value="1"/>
</dbReference>
<dbReference type="SUPFAM" id="SSF63892">
    <property type="entry name" value="Pyridoxine 5'-phosphate synthase"/>
    <property type="match status" value="1"/>
</dbReference>
<proteinExistence type="inferred from homology"/>
<sequence length="251" mass="27543">MIELGVNIDHIATIRQARRTYEPDPVWGAVEAHLGGADGITVHLREDRRHIQDSDVRRLRETTQIKLNLEMAATDEMVGIACGLKPEMAMLVPEGRHEVTTEGGLDILAQEARLKGVISRLADAGIVTSVFIDADPEQIEAAARIGASVCEIHTGPYAHAFYDKGRDAEAPAVLAEIAKIRKAGQTIRHLGMRFNAGHALNYYNVQPLARLAGIRELHIGHAIVSRAVFVGLREAVREMKVLMREAAERGE</sequence>
<protein>
    <recommendedName>
        <fullName evidence="1">Pyridoxine 5'-phosphate synthase</fullName>
        <shortName evidence="1">PNP synthase</shortName>
        <ecNumber evidence="1">2.6.99.2</ecNumber>
    </recommendedName>
</protein>
<name>PDXJ_DECAR</name>
<evidence type="ECO:0000255" key="1">
    <source>
        <dbReference type="HAMAP-Rule" id="MF_00279"/>
    </source>
</evidence>
<feature type="chain" id="PRO_0000231801" description="Pyridoxine 5'-phosphate synthase">
    <location>
        <begin position="1"/>
        <end position="251"/>
    </location>
</feature>
<feature type="active site" description="Proton acceptor" evidence="1">
    <location>
        <position position="43"/>
    </location>
</feature>
<feature type="active site" description="Proton acceptor" evidence="1">
    <location>
        <position position="70"/>
    </location>
</feature>
<feature type="active site" description="Proton donor" evidence="1">
    <location>
        <position position="198"/>
    </location>
</feature>
<feature type="binding site" evidence="1">
    <location>
        <position position="7"/>
    </location>
    <ligand>
        <name>3-amino-2-oxopropyl phosphate</name>
        <dbReference type="ChEBI" id="CHEBI:57279"/>
    </ligand>
</feature>
<feature type="binding site" evidence="1">
    <location>
        <begin position="9"/>
        <end position="10"/>
    </location>
    <ligand>
        <name>1-deoxy-D-xylulose 5-phosphate</name>
        <dbReference type="ChEBI" id="CHEBI:57792"/>
    </ligand>
</feature>
<feature type="binding site" evidence="1">
    <location>
        <position position="18"/>
    </location>
    <ligand>
        <name>3-amino-2-oxopropyl phosphate</name>
        <dbReference type="ChEBI" id="CHEBI:57279"/>
    </ligand>
</feature>
<feature type="binding site" evidence="1">
    <location>
        <position position="45"/>
    </location>
    <ligand>
        <name>1-deoxy-D-xylulose 5-phosphate</name>
        <dbReference type="ChEBI" id="CHEBI:57792"/>
    </ligand>
</feature>
<feature type="binding site" evidence="1">
    <location>
        <position position="50"/>
    </location>
    <ligand>
        <name>1-deoxy-D-xylulose 5-phosphate</name>
        <dbReference type="ChEBI" id="CHEBI:57792"/>
    </ligand>
</feature>
<feature type="binding site" evidence="1">
    <location>
        <position position="100"/>
    </location>
    <ligand>
        <name>1-deoxy-D-xylulose 5-phosphate</name>
        <dbReference type="ChEBI" id="CHEBI:57792"/>
    </ligand>
</feature>
<feature type="binding site" evidence="1">
    <location>
        <position position="199"/>
    </location>
    <ligand>
        <name>3-amino-2-oxopropyl phosphate</name>
        <dbReference type="ChEBI" id="CHEBI:57279"/>
    </ligand>
</feature>
<feature type="binding site" evidence="1">
    <location>
        <begin position="220"/>
        <end position="221"/>
    </location>
    <ligand>
        <name>3-amino-2-oxopropyl phosphate</name>
        <dbReference type="ChEBI" id="CHEBI:57279"/>
    </ligand>
</feature>
<feature type="site" description="Transition state stabilizer" evidence="1">
    <location>
        <position position="151"/>
    </location>
</feature>
<reference key="1">
    <citation type="journal article" date="2009" name="BMC Genomics">
        <title>Metabolic analysis of the soil microbe Dechloromonas aromatica str. RCB: indications of a surprisingly complex life-style and cryptic anaerobic pathways for aromatic degradation.</title>
        <authorList>
            <person name="Salinero K.K."/>
            <person name="Keller K."/>
            <person name="Feil W.S."/>
            <person name="Feil H."/>
            <person name="Trong S."/>
            <person name="Di Bartolo G."/>
            <person name="Lapidus A."/>
        </authorList>
    </citation>
    <scope>NUCLEOTIDE SEQUENCE [LARGE SCALE GENOMIC DNA]</scope>
    <source>
        <strain>RCB</strain>
    </source>
</reference>
<gene>
    <name evidence="1" type="primary">pdxJ</name>
    <name type="ordered locus">Daro_2032</name>
</gene>